<comment type="catalytic activity">
    <reaction evidence="1">
        <text>uridine + ATP = UMP + ADP + H(+)</text>
        <dbReference type="Rhea" id="RHEA:16825"/>
        <dbReference type="ChEBI" id="CHEBI:15378"/>
        <dbReference type="ChEBI" id="CHEBI:16704"/>
        <dbReference type="ChEBI" id="CHEBI:30616"/>
        <dbReference type="ChEBI" id="CHEBI:57865"/>
        <dbReference type="ChEBI" id="CHEBI:456216"/>
        <dbReference type="EC" id="2.7.1.48"/>
    </reaction>
</comment>
<comment type="catalytic activity">
    <reaction evidence="1">
        <text>cytidine + ATP = CMP + ADP + H(+)</text>
        <dbReference type="Rhea" id="RHEA:24674"/>
        <dbReference type="ChEBI" id="CHEBI:15378"/>
        <dbReference type="ChEBI" id="CHEBI:17562"/>
        <dbReference type="ChEBI" id="CHEBI:30616"/>
        <dbReference type="ChEBI" id="CHEBI:60377"/>
        <dbReference type="ChEBI" id="CHEBI:456216"/>
        <dbReference type="EC" id="2.7.1.48"/>
    </reaction>
</comment>
<comment type="pathway">
    <text evidence="1">Pyrimidine metabolism; CTP biosynthesis via salvage pathway; CTP from cytidine: step 1/3.</text>
</comment>
<comment type="pathway">
    <text evidence="1">Pyrimidine metabolism; UMP biosynthesis via salvage pathway; UMP from uridine: step 1/1.</text>
</comment>
<comment type="subcellular location">
    <subcellularLocation>
        <location evidence="1">Cytoplasm</location>
    </subcellularLocation>
</comment>
<comment type="similarity">
    <text evidence="1">Belongs to the uridine kinase family.</text>
</comment>
<dbReference type="EC" id="2.7.1.48" evidence="1"/>
<dbReference type="EMBL" id="AE009948">
    <property type="protein sequence ID" value="AAM99713.1"/>
    <property type="molecule type" value="Genomic_DNA"/>
</dbReference>
<dbReference type="RefSeq" id="NP_687841.1">
    <property type="nucleotide sequence ID" value="NC_004116.1"/>
</dbReference>
<dbReference type="RefSeq" id="WP_001227823.1">
    <property type="nucleotide sequence ID" value="NC_004116.1"/>
</dbReference>
<dbReference type="SMR" id="Q8E0A8"/>
<dbReference type="STRING" id="208435.SAG0826"/>
<dbReference type="KEGG" id="sag:SAG0826"/>
<dbReference type="PATRIC" id="fig|208435.3.peg.832"/>
<dbReference type="HOGENOM" id="CLU_021278_1_2_9"/>
<dbReference type="OrthoDB" id="9777642at2"/>
<dbReference type="UniPathway" id="UPA00574">
    <property type="reaction ID" value="UER00637"/>
</dbReference>
<dbReference type="UniPathway" id="UPA00579">
    <property type="reaction ID" value="UER00640"/>
</dbReference>
<dbReference type="Proteomes" id="UP000000821">
    <property type="component" value="Chromosome"/>
</dbReference>
<dbReference type="GO" id="GO:0005737">
    <property type="term" value="C:cytoplasm"/>
    <property type="evidence" value="ECO:0007669"/>
    <property type="project" value="UniProtKB-SubCell"/>
</dbReference>
<dbReference type="GO" id="GO:0005524">
    <property type="term" value="F:ATP binding"/>
    <property type="evidence" value="ECO:0007669"/>
    <property type="project" value="UniProtKB-UniRule"/>
</dbReference>
<dbReference type="GO" id="GO:0043771">
    <property type="term" value="F:cytidine kinase activity"/>
    <property type="evidence" value="ECO:0007669"/>
    <property type="project" value="RHEA"/>
</dbReference>
<dbReference type="GO" id="GO:0004849">
    <property type="term" value="F:uridine kinase activity"/>
    <property type="evidence" value="ECO:0007669"/>
    <property type="project" value="UniProtKB-UniRule"/>
</dbReference>
<dbReference type="GO" id="GO:0044211">
    <property type="term" value="P:CTP salvage"/>
    <property type="evidence" value="ECO:0007669"/>
    <property type="project" value="UniProtKB-UniRule"/>
</dbReference>
<dbReference type="GO" id="GO:0044206">
    <property type="term" value="P:UMP salvage"/>
    <property type="evidence" value="ECO:0007669"/>
    <property type="project" value="UniProtKB-UniRule"/>
</dbReference>
<dbReference type="CDD" id="cd02023">
    <property type="entry name" value="UMPK"/>
    <property type="match status" value="1"/>
</dbReference>
<dbReference type="Gene3D" id="3.40.50.300">
    <property type="entry name" value="P-loop containing nucleotide triphosphate hydrolases"/>
    <property type="match status" value="1"/>
</dbReference>
<dbReference type="HAMAP" id="MF_00551">
    <property type="entry name" value="Uridine_kinase"/>
    <property type="match status" value="1"/>
</dbReference>
<dbReference type="InterPro" id="IPR027417">
    <property type="entry name" value="P-loop_NTPase"/>
</dbReference>
<dbReference type="InterPro" id="IPR006083">
    <property type="entry name" value="PRK/URK"/>
</dbReference>
<dbReference type="InterPro" id="IPR026008">
    <property type="entry name" value="Uridine_kinase"/>
</dbReference>
<dbReference type="InterPro" id="IPR000764">
    <property type="entry name" value="Uridine_kinase-like"/>
</dbReference>
<dbReference type="NCBIfam" id="NF004018">
    <property type="entry name" value="PRK05480.1"/>
    <property type="match status" value="1"/>
</dbReference>
<dbReference type="NCBIfam" id="TIGR00235">
    <property type="entry name" value="udk"/>
    <property type="match status" value="1"/>
</dbReference>
<dbReference type="PANTHER" id="PTHR10285">
    <property type="entry name" value="URIDINE KINASE"/>
    <property type="match status" value="1"/>
</dbReference>
<dbReference type="Pfam" id="PF00485">
    <property type="entry name" value="PRK"/>
    <property type="match status" value="1"/>
</dbReference>
<dbReference type="PRINTS" id="PR00988">
    <property type="entry name" value="URIDINKINASE"/>
</dbReference>
<dbReference type="SUPFAM" id="SSF52540">
    <property type="entry name" value="P-loop containing nucleoside triphosphate hydrolases"/>
    <property type="match status" value="1"/>
</dbReference>
<reference key="1">
    <citation type="journal article" date="2002" name="Proc. Natl. Acad. Sci. U.S.A.">
        <title>Complete genome sequence and comparative genomic analysis of an emerging human pathogen, serotype V Streptococcus agalactiae.</title>
        <authorList>
            <person name="Tettelin H."/>
            <person name="Masignani V."/>
            <person name="Cieslewicz M.J."/>
            <person name="Eisen J.A."/>
            <person name="Peterson S.N."/>
            <person name="Wessels M.R."/>
            <person name="Paulsen I.T."/>
            <person name="Nelson K.E."/>
            <person name="Margarit I."/>
            <person name="Read T.D."/>
            <person name="Madoff L.C."/>
            <person name="Wolf A.M."/>
            <person name="Beanan M.J."/>
            <person name="Brinkac L.M."/>
            <person name="Daugherty S.C."/>
            <person name="DeBoy R.T."/>
            <person name="Durkin A.S."/>
            <person name="Kolonay J.F."/>
            <person name="Madupu R."/>
            <person name="Lewis M.R."/>
            <person name="Radune D."/>
            <person name="Fedorova N.B."/>
            <person name="Scanlan D."/>
            <person name="Khouri H.M."/>
            <person name="Mulligan S."/>
            <person name="Carty H.A."/>
            <person name="Cline R.T."/>
            <person name="Van Aken S.E."/>
            <person name="Gill J."/>
            <person name="Scarselli M."/>
            <person name="Mora M."/>
            <person name="Iacobini E.T."/>
            <person name="Brettoni C."/>
            <person name="Galli G."/>
            <person name="Mariani M."/>
            <person name="Vegni F."/>
            <person name="Maione D."/>
            <person name="Rinaudo D."/>
            <person name="Rappuoli R."/>
            <person name="Telford J.L."/>
            <person name="Kasper D.L."/>
            <person name="Grandi G."/>
            <person name="Fraser C.M."/>
        </authorList>
    </citation>
    <scope>NUCLEOTIDE SEQUENCE [LARGE SCALE GENOMIC DNA]</scope>
    <source>
        <strain>ATCC BAA-611 / 2603 V/R</strain>
    </source>
</reference>
<organism>
    <name type="scientific">Streptococcus agalactiae serotype V (strain ATCC BAA-611 / 2603 V/R)</name>
    <dbReference type="NCBI Taxonomy" id="208435"/>
    <lineage>
        <taxon>Bacteria</taxon>
        <taxon>Bacillati</taxon>
        <taxon>Bacillota</taxon>
        <taxon>Bacilli</taxon>
        <taxon>Lactobacillales</taxon>
        <taxon>Streptococcaceae</taxon>
        <taxon>Streptococcus</taxon>
    </lineage>
</organism>
<name>URK_STRA5</name>
<gene>
    <name evidence="1" type="primary">udk</name>
    <name type="ordered locus">SAG0826</name>
</gene>
<evidence type="ECO:0000255" key="1">
    <source>
        <dbReference type="HAMAP-Rule" id="MF_00551"/>
    </source>
</evidence>
<keyword id="KW-0067">ATP-binding</keyword>
<keyword id="KW-0963">Cytoplasm</keyword>
<keyword id="KW-0418">Kinase</keyword>
<keyword id="KW-0547">Nucleotide-binding</keyword>
<keyword id="KW-1185">Reference proteome</keyword>
<keyword id="KW-0808">Transferase</keyword>
<feature type="chain" id="PRO_1000017907" description="Uridine kinase">
    <location>
        <begin position="1"/>
        <end position="209"/>
    </location>
</feature>
<feature type="binding site" evidence="1">
    <location>
        <begin position="12"/>
        <end position="19"/>
    </location>
    <ligand>
        <name>ATP</name>
        <dbReference type="ChEBI" id="CHEBI:30616"/>
    </ligand>
</feature>
<proteinExistence type="inferred from homology"/>
<sequence>MRKKPIIIGVTGGSGGGKTSVSRAILSNFPDQKITMIEHDSYYKDQSHLTFEERVKTNYDHPLAFDTNLMIEQLNELIEGRPVDIPVYDYTKHTRSDRTIRQEPQDVIIVEGILVLEDQRLRDLMDIKLFVDTDDDIRIIRRIKRDMEERDRSLDSIIEQYTEVVKPMYHQFIEPTKRYADIVIPEGVSNIVAIDLINTKVASILNEAK</sequence>
<protein>
    <recommendedName>
        <fullName evidence="1">Uridine kinase</fullName>
        <ecNumber evidence="1">2.7.1.48</ecNumber>
    </recommendedName>
    <alternativeName>
        <fullName evidence="1">Cytidine monophosphokinase</fullName>
    </alternativeName>
    <alternativeName>
        <fullName evidence="1">Uridine monophosphokinase</fullName>
    </alternativeName>
</protein>
<accession>Q8E0A8</accession>